<proteinExistence type="inferred from homology"/>
<comment type="function">
    <text evidence="1">NAD-binding protein involved in the addition of a carboxymethylaminomethyl (cmnm) group at the wobble position (U34) of certain tRNAs, forming tRNA-cmnm(5)s(2)U34.</text>
</comment>
<comment type="cofactor">
    <cofactor evidence="1">
        <name>FAD</name>
        <dbReference type="ChEBI" id="CHEBI:57692"/>
    </cofactor>
</comment>
<comment type="subunit">
    <text evidence="1">Homodimer. Heterotetramer of two MnmE and two MnmG subunits.</text>
</comment>
<comment type="subcellular location">
    <subcellularLocation>
        <location evidence="1">Cytoplasm</location>
    </subcellularLocation>
</comment>
<comment type="similarity">
    <text evidence="1">Belongs to the MnmG family.</text>
</comment>
<feature type="chain" id="PRO_0000117084" description="tRNA uridine 5-carboxymethylaminomethyl modification enzyme MnmG">
    <location>
        <begin position="1"/>
        <end position="611"/>
    </location>
</feature>
<feature type="binding site" evidence="1">
    <location>
        <begin position="14"/>
        <end position="19"/>
    </location>
    <ligand>
        <name>FAD</name>
        <dbReference type="ChEBI" id="CHEBI:57692"/>
    </ligand>
</feature>
<feature type="binding site" evidence="1">
    <location>
        <begin position="274"/>
        <end position="288"/>
    </location>
    <ligand>
        <name>NAD(+)</name>
        <dbReference type="ChEBI" id="CHEBI:57540"/>
    </ligand>
</feature>
<evidence type="ECO:0000255" key="1">
    <source>
        <dbReference type="HAMAP-Rule" id="MF_00129"/>
    </source>
</evidence>
<sequence>MWTHPINYDVIVVGAGHAGCEAAFCSAKMGASVLILSSNLDTIAKLSCNPAVGGIGKGHIVREIDALGGIMAEVTDQSGIQFRILNQTKGPAVRAPRAQVDKQMYHIHMKRLLESSPGLHIMQGTVESLLDNENVIQGVTTKEGITYLGKTVILSSGTFMRGLIHIGDLNFPGGRLGDPAATGLSLALKERGFPISRLKTGTPPRLLASSIDFSVTEEQPGDPGVGFVHRSEPFVPPLPQVSCYITHTTEKTKDIIAANIHRSALYGGRIEGIGPRYCPSIEDKIVKFADKERHHIFIEPEGIHTQEVYVNGLSTSMPFDVQYDMIRSVLGLENAIITRPAYAIEYDYVHGNVIYPTLESKLIEGLFLCGQINGTTGYEEAAAQGLIAGINAVNKVLKKPAFIPSRQESYIGVMLDDLTTQILDEPYRMFTGRAEHRLLLRQDNACLRLSHYGRDLGLLSKERYEIFENQKQIIEEEKLRLSKTFKKYGNSVVSLAKALCRPEVSYDTLREAFPEDIRDYGSTLNASLEMEIKYAGYIDRQKALIHSLSKSENMVIPEDIDYQSISSLSLEAREKLAKFTPRTIGSASRISGIACADIQVLMVAVKKHAHQ</sequence>
<keyword id="KW-0963">Cytoplasm</keyword>
<keyword id="KW-0274">FAD</keyword>
<keyword id="KW-0285">Flavoprotein</keyword>
<keyword id="KW-0520">NAD</keyword>
<keyword id="KW-0819">tRNA processing</keyword>
<organism>
    <name type="scientific">Chlamydia abortus (strain DSM 27085 / S26/3)</name>
    <name type="common">Chlamydophila abortus</name>
    <dbReference type="NCBI Taxonomy" id="218497"/>
    <lineage>
        <taxon>Bacteria</taxon>
        <taxon>Pseudomonadati</taxon>
        <taxon>Chlamydiota</taxon>
        <taxon>Chlamydiia</taxon>
        <taxon>Chlamydiales</taxon>
        <taxon>Chlamydiaceae</taxon>
        <taxon>Chlamydia/Chlamydophila group</taxon>
        <taxon>Chlamydia</taxon>
    </lineage>
</organism>
<accession>Q5L6Z0</accession>
<gene>
    <name evidence="1" type="primary">mnmG</name>
    <name evidence="1" type="synonym">gidA</name>
    <name type="ordered locus">CAB122</name>
</gene>
<name>MNMG_CHLAB</name>
<protein>
    <recommendedName>
        <fullName evidence="1">tRNA uridine 5-carboxymethylaminomethyl modification enzyme MnmG</fullName>
    </recommendedName>
    <alternativeName>
        <fullName evidence="1">Glucose-inhibited division protein A</fullName>
    </alternativeName>
</protein>
<reference key="1">
    <citation type="journal article" date="2005" name="Genome Res.">
        <title>The Chlamydophila abortus genome sequence reveals an array of variable proteins that contribute to interspecies variation.</title>
        <authorList>
            <person name="Thomson N.R."/>
            <person name="Yeats C."/>
            <person name="Bell K."/>
            <person name="Holden M.T.G."/>
            <person name="Bentley S.D."/>
            <person name="Livingstone M."/>
            <person name="Cerdeno-Tarraga A.-M."/>
            <person name="Harris B."/>
            <person name="Doggett J."/>
            <person name="Ormond D."/>
            <person name="Mungall K."/>
            <person name="Clarke K."/>
            <person name="Feltwell T."/>
            <person name="Hance Z."/>
            <person name="Sanders M."/>
            <person name="Quail M.A."/>
            <person name="Price C."/>
            <person name="Barrell B.G."/>
            <person name="Parkhill J."/>
            <person name="Longbottom D."/>
        </authorList>
    </citation>
    <scope>NUCLEOTIDE SEQUENCE [LARGE SCALE GENOMIC DNA]</scope>
    <source>
        <strain>DSM 27085 / S26/3</strain>
    </source>
</reference>
<dbReference type="EMBL" id="CR848038">
    <property type="protein sequence ID" value="CAH63580.1"/>
    <property type="molecule type" value="Genomic_DNA"/>
</dbReference>
<dbReference type="RefSeq" id="WP_011096842.1">
    <property type="nucleotide sequence ID" value="NC_004552.2"/>
</dbReference>
<dbReference type="SMR" id="Q5L6Z0"/>
<dbReference type="GeneID" id="93024670"/>
<dbReference type="KEGG" id="cab:CAB122"/>
<dbReference type="eggNOG" id="COG0445">
    <property type="taxonomic scope" value="Bacteria"/>
</dbReference>
<dbReference type="HOGENOM" id="CLU_007831_2_2_0"/>
<dbReference type="OrthoDB" id="9815560at2"/>
<dbReference type="Proteomes" id="UP000001012">
    <property type="component" value="Chromosome"/>
</dbReference>
<dbReference type="GO" id="GO:0005829">
    <property type="term" value="C:cytosol"/>
    <property type="evidence" value="ECO:0007669"/>
    <property type="project" value="TreeGrafter"/>
</dbReference>
<dbReference type="GO" id="GO:0050660">
    <property type="term" value="F:flavin adenine dinucleotide binding"/>
    <property type="evidence" value="ECO:0007669"/>
    <property type="project" value="UniProtKB-UniRule"/>
</dbReference>
<dbReference type="GO" id="GO:0030488">
    <property type="term" value="P:tRNA methylation"/>
    <property type="evidence" value="ECO:0007669"/>
    <property type="project" value="TreeGrafter"/>
</dbReference>
<dbReference type="GO" id="GO:0002098">
    <property type="term" value="P:tRNA wobble uridine modification"/>
    <property type="evidence" value="ECO:0007669"/>
    <property type="project" value="InterPro"/>
</dbReference>
<dbReference type="FunFam" id="1.10.150.570:FF:000001">
    <property type="entry name" value="tRNA uridine 5-carboxymethylaminomethyl modification enzyme MnmG"/>
    <property type="match status" value="1"/>
</dbReference>
<dbReference type="FunFam" id="3.50.50.60:FF:000002">
    <property type="entry name" value="tRNA uridine 5-carboxymethylaminomethyl modification enzyme MnmG"/>
    <property type="match status" value="1"/>
</dbReference>
<dbReference type="Gene3D" id="3.50.50.60">
    <property type="entry name" value="FAD/NAD(P)-binding domain"/>
    <property type="match status" value="2"/>
</dbReference>
<dbReference type="Gene3D" id="1.10.150.570">
    <property type="entry name" value="GidA associated domain, C-terminal subdomain"/>
    <property type="match status" value="1"/>
</dbReference>
<dbReference type="Gene3D" id="1.10.10.1800">
    <property type="entry name" value="tRNA uridine 5-carboxymethylaminomethyl modification enzyme MnmG/GidA"/>
    <property type="match status" value="1"/>
</dbReference>
<dbReference type="HAMAP" id="MF_00129">
    <property type="entry name" value="MnmG_GidA"/>
    <property type="match status" value="1"/>
</dbReference>
<dbReference type="InterPro" id="IPR036188">
    <property type="entry name" value="FAD/NAD-bd_sf"/>
</dbReference>
<dbReference type="InterPro" id="IPR049312">
    <property type="entry name" value="GIDA_C_N"/>
</dbReference>
<dbReference type="InterPro" id="IPR004416">
    <property type="entry name" value="MnmG"/>
</dbReference>
<dbReference type="InterPro" id="IPR002218">
    <property type="entry name" value="MnmG-rel"/>
</dbReference>
<dbReference type="InterPro" id="IPR020595">
    <property type="entry name" value="MnmG-rel_CS"/>
</dbReference>
<dbReference type="InterPro" id="IPR026904">
    <property type="entry name" value="MnmG_C"/>
</dbReference>
<dbReference type="InterPro" id="IPR047001">
    <property type="entry name" value="MnmG_C_subdom"/>
</dbReference>
<dbReference type="InterPro" id="IPR044920">
    <property type="entry name" value="MnmG_C_subdom_sf"/>
</dbReference>
<dbReference type="InterPro" id="IPR040131">
    <property type="entry name" value="MnmG_N"/>
</dbReference>
<dbReference type="NCBIfam" id="TIGR00136">
    <property type="entry name" value="mnmG_gidA"/>
    <property type="match status" value="1"/>
</dbReference>
<dbReference type="PANTHER" id="PTHR11806">
    <property type="entry name" value="GLUCOSE INHIBITED DIVISION PROTEIN A"/>
    <property type="match status" value="1"/>
</dbReference>
<dbReference type="PANTHER" id="PTHR11806:SF0">
    <property type="entry name" value="PROTEIN MTO1 HOMOLOG, MITOCHONDRIAL"/>
    <property type="match status" value="1"/>
</dbReference>
<dbReference type="Pfam" id="PF01134">
    <property type="entry name" value="GIDA"/>
    <property type="match status" value="1"/>
</dbReference>
<dbReference type="Pfam" id="PF21680">
    <property type="entry name" value="GIDA_C_1st"/>
    <property type="match status" value="1"/>
</dbReference>
<dbReference type="Pfam" id="PF13932">
    <property type="entry name" value="SAM_GIDA_C"/>
    <property type="match status" value="1"/>
</dbReference>
<dbReference type="SMART" id="SM01228">
    <property type="entry name" value="GIDA_assoc_3"/>
    <property type="match status" value="1"/>
</dbReference>
<dbReference type="SUPFAM" id="SSF51905">
    <property type="entry name" value="FAD/NAD(P)-binding domain"/>
    <property type="match status" value="1"/>
</dbReference>
<dbReference type="PROSITE" id="PS01280">
    <property type="entry name" value="GIDA_1"/>
    <property type="match status" value="1"/>
</dbReference>
<dbReference type="PROSITE" id="PS01281">
    <property type="entry name" value="GIDA_2"/>
    <property type="match status" value="1"/>
</dbReference>